<dbReference type="EC" id="6.1.1.14" evidence="1"/>
<dbReference type="EMBL" id="CP000507">
    <property type="protein sequence ID" value="ABL98238.1"/>
    <property type="molecule type" value="Genomic_DNA"/>
</dbReference>
<dbReference type="RefSeq" id="WP_011758149.1">
    <property type="nucleotide sequence ID" value="NC_008700.1"/>
</dbReference>
<dbReference type="SMR" id="A1S1I2"/>
<dbReference type="STRING" id="326297.Sama_0026"/>
<dbReference type="KEGG" id="saz:Sama_0026"/>
<dbReference type="eggNOG" id="COG0752">
    <property type="taxonomic scope" value="Bacteria"/>
</dbReference>
<dbReference type="HOGENOM" id="CLU_057066_1_0_6"/>
<dbReference type="OrthoDB" id="9802183at2"/>
<dbReference type="Proteomes" id="UP000009175">
    <property type="component" value="Chromosome"/>
</dbReference>
<dbReference type="GO" id="GO:0005829">
    <property type="term" value="C:cytosol"/>
    <property type="evidence" value="ECO:0007669"/>
    <property type="project" value="TreeGrafter"/>
</dbReference>
<dbReference type="GO" id="GO:0005524">
    <property type="term" value="F:ATP binding"/>
    <property type="evidence" value="ECO:0007669"/>
    <property type="project" value="UniProtKB-UniRule"/>
</dbReference>
<dbReference type="GO" id="GO:0004820">
    <property type="term" value="F:glycine-tRNA ligase activity"/>
    <property type="evidence" value="ECO:0007669"/>
    <property type="project" value="UniProtKB-UniRule"/>
</dbReference>
<dbReference type="GO" id="GO:0006426">
    <property type="term" value="P:glycyl-tRNA aminoacylation"/>
    <property type="evidence" value="ECO:0007669"/>
    <property type="project" value="UniProtKB-UniRule"/>
</dbReference>
<dbReference type="CDD" id="cd00733">
    <property type="entry name" value="GlyRS_alpha_core"/>
    <property type="match status" value="1"/>
</dbReference>
<dbReference type="FunFam" id="3.30.930.10:FF:000006">
    <property type="entry name" value="Glycine--tRNA ligase alpha subunit"/>
    <property type="match status" value="1"/>
</dbReference>
<dbReference type="Gene3D" id="3.30.930.10">
    <property type="entry name" value="Bira Bifunctional Protein, Domain 2"/>
    <property type="match status" value="1"/>
</dbReference>
<dbReference type="Gene3D" id="1.20.58.180">
    <property type="entry name" value="Class II aaRS and biotin synthetases, domain 2"/>
    <property type="match status" value="1"/>
</dbReference>
<dbReference type="HAMAP" id="MF_00254">
    <property type="entry name" value="Gly_tRNA_synth_alpha"/>
    <property type="match status" value="1"/>
</dbReference>
<dbReference type="InterPro" id="IPR045864">
    <property type="entry name" value="aa-tRNA-synth_II/BPL/LPL"/>
</dbReference>
<dbReference type="InterPro" id="IPR006194">
    <property type="entry name" value="Gly-tRNA-synth_heterodimer"/>
</dbReference>
<dbReference type="InterPro" id="IPR002310">
    <property type="entry name" value="Gly-tRNA_ligase_asu"/>
</dbReference>
<dbReference type="NCBIfam" id="TIGR00388">
    <property type="entry name" value="glyQ"/>
    <property type="match status" value="1"/>
</dbReference>
<dbReference type="NCBIfam" id="NF006827">
    <property type="entry name" value="PRK09348.1"/>
    <property type="match status" value="1"/>
</dbReference>
<dbReference type="PANTHER" id="PTHR30075:SF2">
    <property type="entry name" value="GLYCINE--TRNA LIGASE, CHLOROPLASTIC_MITOCHONDRIAL 2"/>
    <property type="match status" value="1"/>
</dbReference>
<dbReference type="PANTHER" id="PTHR30075">
    <property type="entry name" value="GLYCYL-TRNA SYNTHETASE"/>
    <property type="match status" value="1"/>
</dbReference>
<dbReference type="Pfam" id="PF02091">
    <property type="entry name" value="tRNA-synt_2e"/>
    <property type="match status" value="1"/>
</dbReference>
<dbReference type="PRINTS" id="PR01044">
    <property type="entry name" value="TRNASYNTHGA"/>
</dbReference>
<dbReference type="SUPFAM" id="SSF55681">
    <property type="entry name" value="Class II aaRS and biotin synthetases"/>
    <property type="match status" value="1"/>
</dbReference>
<dbReference type="PROSITE" id="PS50861">
    <property type="entry name" value="AA_TRNA_LIGASE_II_GLYAB"/>
    <property type="match status" value="1"/>
</dbReference>
<accession>A1S1I2</accession>
<protein>
    <recommendedName>
        <fullName evidence="1">Glycine--tRNA ligase alpha subunit</fullName>
        <ecNumber evidence="1">6.1.1.14</ecNumber>
    </recommendedName>
    <alternativeName>
        <fullName evidence="1">Glycyl-tRNA synthetase alpha subunit</fullName>
        <shortName evidence="1">GlyRS</shortName>
    </alternativeName>
</protein>
<reference key="1">
    <citation type="submission" date="2006-12" db="EMBL/GenBank/DDBJ databases">
        <title>Complete sequence of Shewanella amazonensis SB2B.</title>
        <authorList>
            <consortium name="US DOE Joint Genome Institute"/>
            <person name="Copeland A."/>
            <person name="Lucas S."/>
            <person name="Lapidus A."/>
            <person name="Barry K."/>
            <person name="Detter J.C."/>
            <person name="Glavina del Rio T."/>
            <person name="Hammon N."/>
            <person name="Israni S."/>
            <person name="Dalin E."/>
            <person name="Tice H."/>
            <person name="Pitluck S."/>
            <person name="Munk A.C."/>
            <person name="Brettin T."/>
            <person name="Bruce D."/>
            <person name="Han C."/>
            <person name="Tapia R."/>
            <person name="Gilna P."/>
            <person name="Schmutz J."/>
            <person name="Larimer F."/>
            <person name="Land M."/>
            <person name="Hauser L."/>
            <person name="Kyrpides N."/>
            <person name="Mikhailova N."/>
            <person name="Fredrickson J."/>
            <person name="Richardson P."/>
        </authorList>
    </citation>
    <scope>NUCLEOTIDE SEQUENCE [LARGE SCALE GENOMIC DNA]</scope>
    <source>
        <strain>ATCC BAA-1098 / SB2B</strain>
    </source>
</reference>
<gene>
    <name evidence="1" type="primary">glyQ</name>
    <name type="ordered locus">Sama_0026</name>
</gene>
<name>SYGA_SHEAM</name>
<organism>
    <name type="scientific">Shewanella amazonensis (strain ATCC BAA-1098 / SB2B)</name>
    <dbReference type="NCBI Taxonomy" id="326297"/>
    <lineage>
        <taxon>Bacteria</taxon>
        <taxon>Pseudomonadati</taxon>
        <taxon>Pseudomonadota</taxon>
        <taxon>Gammaproteobacteria</taxon>
        <taxon>Alteromonadales</taxon>
        <taxon>Shewanellaceae</taxon>
        <taxon>Shewanella</taxon>
    </lineage>
</organism>
<comment type="catalytic activity">
    <reaction evidence="1">
        <text>tRNA(Gly) + glycine + ATP = glycyl-tRNA(Gly) + AMP + diphosphate</text>
        <dbReference type="Rhea" id="RHEA:16013"/>
        <dbReference type="Rhea" id="RHEA-COMP:9664"/>
        <dbReference type="Rhea" id="RHEA-COMP:9683"/>
        <dbReference type="ChEBI" id="CHEBI:30616"/>
        <dbReference type="ChEBI" id="CHEBI:33019"/>
        <dbReference type="ChEBI" id="CHEBI:57305"/>
        <dbReference type="ChEBI" id="CHEBI:78442"/>
        <dbReference type="ChEBI" id="CHEBI:78522"/>
        <dbReference type="ChEBI" id="CHEBI:456215"/>
        <dbReference type="EC" id="6.1.1.14"/>
    </reaction>
</comment>
<comment type="subunit">
    <text evidence="1">Tetramer of two alpha and two beta subunits.</text>
</comment>
<comment type="subcellular location">
    <subcellularLocation>
        <location evidence="1">Cytoplasm</location>
    </subcellularLocation>
</comment>
<comment type="similarity">
    <text evidence="1">Belongs to the class-II aminoacyl-tRNA synthetase family.</text>
</comment>
<evidence type="ECO:0000255" key="1">
    <source>
        <dbReference type="HAMAP-Rule" id="MF_00254"/>
    </source>
</evidence>
<feature type="chain" id="PRO_1000047482" description="Glycine--tRNA ligase alpha subunit">
    <location>
        <begin position="1"/>
        <end position="301"/>
    </location>
</feature>
<proteinExistence type="inferred from homology"/>
<keyword id="KW-0030">Aminoacyl-tRNA synthetase</keyword>
<keyword id="KW-0067">ATP-binding</keyword>
<keyword id="KW-0963">Cytoplasm</keyword>
<keyword id="KW-0436">Ligase</keyword>
<keyword id="KW-0547">Nucleotide-binding</keyword>
<keyword id="KW-0648">Protein biosynthesis</keyword>
<keyword id="KW-1185">Reference proteome</keyword>
<sequence>MTTKYDVKTFQGFILTLQDYWAQQGCAIVQPLDMEVGAGTFHPQTFLRALGPEPMSSAYVQPSRRPTDGRYGENPNRLQHYYQFQVVLKPSPDNIQELYLGSLRALGIDTQIHDIRFVEDNWESPTLGAWGLGWEVWLNGMEVTQFTYFQQVGGIECSPVTGEITYGLERLAMYIQGVDSVYDLVWTDGPMGRITYGDVFHQNEVEQSTYNFEHADVDFLFGMFDQCEKACQHLLSLETPLPLPAYEQVMKASHAFNLLDARHAISVTERQRYILRVRTMAKAVAEAYYKAREALGFPMCK</sequence>